<reference key="1">
    <citation type="submission" date="2008-10" db="EMBL/GenBank/DDBJ databases">
        <title>Genome sequence of Bacillus anthracis str. CDC 684.</title>
        <authorList>
            <person name="Dodson R.J."/>
            <person name="Munk A.C."/>
            <person name="Brettin T."/>
            <person name="Bruce D."/>
            <person name="Detter C."/>
            <person name="Tapia R."/>
            <person name="Han C."/>
            <person name="Sutton G."/>
            <person name="Sims D."/>
        </authorList>
    </citation>
    <scope>NUCLEOTIDE SEQUENCE [LARGE SCALE GENOMIC DNA]</scope>
    <source>
        <strain>CDC 684 / NRRL 3495</strain>
    </source>
</reference>
<name>BIOD_BACAC</name>
<keyword id="KW-0067">ATP-binding</keyword>
<keyword id="KW-0093">Biotin biosynthesis</keyword>
<keyword id="KW-0963">Cytoplasm</keyword>
<keyword id="KW-0436">Ligase</keyword>
<keyword id="KW-0460">Magnesium</keyword>
<keyword id="KW-0479">Metal-binding</keyword>
<keyword id="KW-0547">Nucleotide-binding</keyword>
<sequence length="242" mass="26294">MSGFFITATDTEVGKTVVAGALAGVFRELGYNIGVYKALQSGHVASNPEGDAARLKVLSGVPIKEDEICPYSIEEPLAPRLAMKRAGRAVTLKDIIHHYNERLKEFNSLFVEGAGGLAVPYTEDALVIDFAKELQLPLIVVARPTLGTVNHTVLTIAYAKAHGLTVAGVILSGCKECEMERVQENKVMIEELSGVPVLGLLPFFEGEFTKEEVLESAKEYIMISKLEEFIRNESTVAHTSSN</sequence>
<evidence type="ECO:0000255" key="1">
    <source>
        <dbReference type="HAMAP-Rule" id="MF_00336"/>
    </source>
</evidence>
<accession>C3LJP5</accession>
<proteinExistence type="inferred from homology"/>
<protein>
    <recommendedName>
        <fullName evidence="1">ATP-dependent dethiobiotin synthetase BioD</fullName>
        <ecNumber evidence="1">6.3.3.3</ecNumber>
    </recommendedName>
    <alternativeName>
        <fullName evidence="1">DTB synthetase</fullName>
        <shortName evidence="1">DTBS</shortName>
    </alternativeName>
    <alternativeName>
        <fullName evidence="1">Dethiobiotin synthase</fullName>
    </alternativeName>
</protein>
<dbReference type="EC" id="6.3.3.3" evidence="1"/>
<dbReference type="EMBL" id="CP001215">
    <property type="protein sequence ID" value="ACP12647.1"/>
    <property type="molecule type" value="Genomic_DNA"/>
</dbReference>
<dbReference type="RefSeq" id="WP_000012483.1">
    <property type="nucleotide sequence ID" value="NC_012581.1"/>
</dbReference>
<dbReference type="SMR" id="C3LJP5"/>
<dbReference type="GeneID" id="45024007"/>
<dbReference type="KEGG" id="bah:BAMEG_4380"/>
<dbReference type="HOGENOM" id="CLU_072551_3_1_9"/>
<dbReference type="UniPathway" id="UPA00078">
    <property type="reaction ID" value="UER00161"/>
</dbReference>
<dbReference type="GO" id="GO:0005829">
    <property type="term" value="C:cytosol"/>
    <property type="evidence" value="ECO:0007669"/>
    <property type="project" value="TreeGrafter"/>
</dbReference>
<dbReference type="GO" id="GO:0005524">
    <property type="term" value="F:ATP binding"/>
    <property type="evidence" value="ECO:0007669"/>
    <property type="project" value="UniProtKB-UniRule"/>
</dbReference>
<dbReference type="GO" id="GO:0004141">
    <property type="term" value="F:dethiobiotin synthase activity"/>
    <property type="evidence" value="ECO:0007669"/>
    <property type="project" value="UniProtKB-UniRule"/>
</dbReference>
<dbReference type="GO" id="GO:0000287">
    <property type="term" value="F:magnesium ion binding"/>
    <property type="evidence" value="ECO:0007669"/>
    <property type="project" value="UniProtKB-UniRule"/>
</dbReference>
<dbReference type="GO" id="GO:0009102">
    <property type="term" value="P:biotin biosynthetic process"/>
    <property type="evidence" value="ECO:0007669"/>
    <property type="project" value="UniProtKB-UniRule"/>
</dbReference>
<dbReference type="CDD" id="cd03109">
    <property type="entry name" value="DTBS"/>
    <property type="match status" value="1"/>
</dbReference>
<dbReference type="FunFam" id="3.40.50.300:FF:001212">
    <property type="entry name" value="ATP-dependent dethiobiotin synthetase BioD"/>
    <property type="match status" value="1"/>
</dbReference>
<dbReference type="Gene3D" id="3.40.50.300">
    <property type="entry name" value="P-loop containing nucleotide triphosphate hydrolases"/>
    <property type="match status" value="1"/>
</dbReference>
<dbReference type="HAMAP" id="MF_00336">
    <property type="entry name" value="BioD"/>
    <property type="match status" value="1"/>
</dbReference>
<dbReference type="InterPro" id="IPR004472">
    <property type="entry name" value="DTB_synth_BioD"/>
</dbReference>
<dbReference type="InterPro" id="IPR027417">
    <property type="entry name" value="P-loop_NTPase"/>
</dbReference>
<dbReference type="NCBIfam" id="TIGR00347">
    <property type="entry name" value="bioD"/>
    <property type="match status" value="1"/>
</dbReference>
<dbReference type="PANTHER" id="PTHR43210:SF2">
    <property type="entry name" value="ATP-DEPENDENT DETHIOBIOTIN SYNTHETASE BIOD 2"/>
    <property type="match status" value="1"/>
</dbReference>
<dbReference type="PANTHER" id="PTHR43210">
    <property type="entry name" value="DETHIOBIOTIN SYNTHETASE"/>
    <property type="match status" value="1"/>
</dbReference>
<dbReference type="Pfam" id="PF13500">
    <property type="entry name" value="AAA_26"/>
    <property type="match status" value="1"/>
</dbReference>
<dbReference type="PIRSF" id="PIRSF006755">
    <property type="entry name" value="DTB_synth"/>
    <property type="match status" value="1"/>
</dbReference>
<dbReference type="SUPFAM" id="SSF52540">
    <property type="entry name" value="P-loop containing nucleoside triphosphate hydrolases"/>
    <property type="match status" value="1"/>
</dbReference>
<comment type="function">
    <text evidence="1">Catalyzes a mechanistically unusual reaction, the ATP-dependent insertion of CO2 between the N7 and N8 nitrogen atoms of 7,8-diaminopelargonic acid (DAPA, also called 7,8-diammoniononanoate) to form a ureido ring.</text>
</comment>
<comment type="catalytic activity">
    <reaction evidence="1">
        <text>(7R,8S)-7,8-diammoniononanoate + CO2 + ATP = (4R,5S)-dethiobiotin + ADP + phosphate + 3 H(+)</text>
        <dbReference type="Rhea" id="RHEA:15805"/>
        <dbReference type="ChEBI" id="CHEBI:15378"/>
        <dbReference type="ChEBI" id="CHEBI:16526"/>
        <dbReference type="ChEBI" id="CHEBI:30616"/>
        <dbReference type="ChEBI" id="CHEBI:43474"/>
        <dbReference type="ChEBI" id="CHEBI:149469"/>
        <dbReference type="ChEBI" id="CHEBI:149473"/>
        <dbReference type="ChEBI" id="CHEBI:456216"/>
        <dbReference type="EC" id="6.3.3.3"/>
    </reaction>
</comment>
<comment type="cofactor">
    <cofactor evidence="1">
        <name>Mg(2+)</name>
        <dbReference type="ChEBI" id="CHEBI:18420"/>
    </cofactor>
</comment>
<comment type="pathway">
    <text evidence="1">Cofactor biosynthesis; biotin biosynthesis; biotin from 7,8-diaminononanoate: step 1/2.</text>
</comment>
<comment type="subunit">
    <text evidence="1">Homodimer.</text>
</comment>
<comment type="subcellular location">
    <subcellularLocation>
        <location evidence="1">Cytoplasm</location>
    </subcellularLocation>
</comment>
<comment type="similarity">
    <text evidence="1">Belongs to the dethiobiotin synthetase family.</text>
</comment>
<organism>
    <name type="scientific">Bacillus anthracis (strain CDC 684 / NRRL 3495)</name>
    <dbReference type="NCBI Taxonomy" id="568206"/>
    <lineage>
        <taxon>Bacteria</taxon>
        <taxon>Bacillati</taxon>
        <taxon>Bacillota</taxon>
        <taxon>Bacilli</taxon>
        <taxon>Bacillales</taxon>
        <taxon>Bacillaceae</taxon>
        <taxon>Bacillus</taxon>
        <taxon>Bacillus cereus group</taxon>
    </lineage>
</organism>
<gene>
    <name evidence="1" type="primary">bioD</name>
    <name type="ordered locus">BAMEG_4380</name>
</gene>
<feature type="chain" id="PRO_1000133201" description="ATP-dependent dethiobiotin synthetase BioD">
    <location>
        <begin position="1"/>
        <end position="242"/>
    </location>
</feature>
<feature type="active site" evidence="1">
    <location>
        <position position="37"/>
    </location>
</feature>
<feature type="binding site" evidence="1">
    <location>
        <begin position="12"/>
        <end position="17"/>
    </location>
    <ligand>
        <name>ATP</name>
        <dbReference type="ChEBI" id="CHEBI:30616"/>
    </ligand>
</feature>
<feature type="binding site" evidence="1">
    <location>
        <position position="16"/>
    </location>
    <ligand>
        <name>Mg(2+)</name>
        <dbReference type="ChEBI" id="CHEBI:18420"/>
    </ligand>
</feature>
<feature type="binding site" evidence="1">
    <location>
        <position position="41"/>
    </location>
    <ligand>
        <name>substrate</name>
    </ligand>
</feature>
<feature type="binding site" evidence="1">
    <location>
        <position position="51"/>
    </location>
    <ligand>
        <name>ATP</name>
        <dbReference type="ChEBI" id="CHEBI:30616"/>
    </ligand>
</feature>
<feature type="binding site" evidence="1">
    <location>
        <position position="51"/>
    </location>
    <ligand>
        <name>Mg(2+)</name>
        <dbReference type="ChEBI" id="CHEBI:18420"/>
    </ligand>
</feature>
<feature type="binding site" evidence="1">
    <location>
        <begin position="112"/>
        <end position="115"/>
    </location>
    <ligand>
        <name>ATP</name>
        <dbReference type="ChEBI" id="CHEBI:30616"/>
    </ligand>
</feature>
<feature type="binding site" evidence="1">
    <location>
        <position position="112"/>
    </location>
    <ligand>
        <name>Mg(2+)</name>
        <dbReference type="ChEBI" id="CHEBI:18420"/>
    </ligand>
</feature>